<reference key="1">
    <citation type="journal article" date="2003" name="Genome Res.">
        <title>The secreted protein discovery initiative (SPDI), a large-scale effort to identify novel human secreted and transmembrane proteins: a bioinformatics assessment.</title>
        <authorList>
            <person name="Clark H.F."/>
            <person name="Gurney A.L."/>
            <person name="Abaya E."/>
            <person name="Baker K."/>
            <person name="Baldwin D.T."/>
            <person name="Brush J."/>
            <person name="Chen J."/>
            <person name="Chow B."/>
            <person name="Chui C."/>
            <person name="Crowley C."/>
            <person name="Currell B."/>
            <person name="Deuel B."/>
            <person name="Dowd P."/>
            <person name="Eaton D."/>
            <person name="Foster J.S."/>
            <person name="Grimaldi C."/>
            <person name="Gu Q."/>
            <person name="Hass P.E."/>
            <person name="Heldens S."/>
            <person name="Huang A."/>
            <person name="Kim H.S."/>
            <person name="Klimowski L."/>
            <person name="Jin Y."/>
            <person name="Johnson S."/>
            <person name="Lee J."/>
            <person name="Lewis L."/>
            <person name="Liao D."/>
            <person name="Mark M.R."/>
            <person name="Robbie E."/>
            <person name="Sanchez C."/>
            <person name="Schoenfeld J."/>
            <person name="Seshagiri S."/>
            <person name="Simmons L."/>
            <person name="Singh J."/>
            <person name="Smith V."/>
            <person name="Stinson J."/>
            <person name="Vagts A."/>
            <person name="Vandlen R.L."/>
            <person name="Watanabe C."/>
            <person name="Wieand D."/>
            <person name="Woods K."/>
            <person name="Xie M.-H."/>
            <person name="Yansura D.G."/>
            <person name="Yi S."/>
            <person name="Yu G."/>
            <person name="Yuan J."/>
            <person name="Zhang M."/>
            <person name="Zhang Z."/>
            <person name="Goddard A.D."/>
            <person name="Wood W.I."/>
            <person name="Godowski P.J."/>
            <person name="Gray A.M."/>
        </authorList>
    </citation>
    <scope>NUCLEOTIDE SEQUENCE [LARGE SCALE MRNA] (ISOFORM 1)</scope>
</reference>
<reference key="2">
    <citation type="submission" date="2003-01" db="EMBL/GenBank/DDBJ databases">
        <title>Full-length cDNA libraries and normalization.</title>
        <authorList>
            <person name="Li W.B."/>
            <person name="Gruber C."/>
            <person name="Jessee J."/>
            <person name="Polayes D."/>
        </authorList>
    </citation>
    <scope>NUCLEOTIDE SEQUENCE [LARGE SCALE MRNA] (ISOFORM 1)</scope>
    <source>
        <tissue>Brain</tissue>
        <tissue>Cervix carcinoma</tissue>
    </source>
</reference>
<reference key="3">
    <citation type="journal article" date="2004" name="Nat. Genet.">
        <title>Complete sequencing and characterization of 21,243 full-length human cDNAs.</title>
        <authorList>
            <person name="Ota T."/>
            <person name="Suzuki Y."/>
            <person name="Nishikawa T."/>
            <person name="Otsuki T."/>
            <person name="Sugiyama T."/>
            <person name="Irie R."/>
            <person name="Wakamatsu A."/>
            <person name="Hayashi K."/>
            <person name="Sato H."/>
            <person name="Nagai K."/>
            <person name="Kimura K."/>
            <person name="Makita H."/>
            <person name="Sekine M."/>
            <person name="Obayashi M."/>
            <person name="Nishi T."/>
            <person name="Shibahara T."/>
            <person name="Tanaka T."/>
            <person name="Ishii S."/>
            <person name="Yamamoto J."/>
            <person name="Saito K."/>
            <person name="Kawai Y."/>
            <person name="Isono Y."/>
            <person name="Nakamura Y."/>
            <person name="Nagahari K."/>
            <person name="Murakami K."/>
            <person name="Yasuda T."/>
            <person name="Iwayanagi T."/>
            <person name="Wagatsuma M."/>
            <person name="Shiratori A."/>
            <person name="Sudo H."/>
            <person name="Hosoiri T."/>
            <person name="Kaku Y."/>
            <person name="Kodaira H."/>
            <person name="Kondo H."/>
            <person name="Sugawara M."/>
            <person name="Takahashi M."/>
            <person name="Kanda K."/>
            <person name="Yokoi T."/>
            <person name="Furuya T."/>
            <person name="Kikkawa E."/>
            <person name="Omura Y."/>
            <person name="Abe K."/>
            <person name="Kamihara K."/>
            <person name="Katsuta N."/>
            <person name="Sato K."/>
            <person name="Tanikawa M."/>
            <person name="Yamazaki M."/>
            <person name="Ninomiya K."/>
            <person name="Ishibashi T."/>
            <person name="Yamashita H."/>
            <person name="Murakawa K."/>
            <person name="Fujimori K."/>
            <person name="Tanai H."/>
            <person name="Kimata M."/>
            <person name="Watanabe M."/>
            <person name="Hiraoka S."/>
            <person name="Chiba Y."/>
            <person name="Ishida S."/>
            <person name="Ono Y."/>
            <person name="Takiguchi S."/>
            <person name="Watanabe S."/>
            <person name="Yosida M."/>
            <person name="Hotuta T."/>
            <person name="Kusano J."/>
            <person name="Kanehori K."/>
            <person name="Takahashi-Fujii A."/>
            <person name="Hara H."/>
            <person name="Tanase T.-O."/>
            <person name="Nomura Y."/>
            <person name="Togiya S."/>
            <person name="Komai F."/>
            <person name="Hara R."/>
            <person name="Takeuchi K."/>
            <person name="Arita M."/>
            <person name="Imose N."/>
            <person name="Musashino K."/>
            <person name="Yuuki H."/>
            <person name="Oshima A."/>
            <person name="Sasaki N."/>
            <person name="Aotsuka S."/>
            <person name="Yoshikawa Y."/>
            <person name="Matsunawa H."/>
            <person name="Ichihara T."/>
            <person name="Shiohata N."/>
            <person name="Sano S."/>
            <person name="Moriya S."/>
            <person name="Momiyama H."/>
            <person name="Satoh N."/>
            <person name="Takami S."/>
            <person name="Terashima Y."/>
            <person name="Suzuki O."/>
            <person name="Nakagawa S."/>
            <person name="Senoh A."/>
            <person name="Mizoguchi H."/>
            <person name="Goto Y."/>
            <person name="Shimizu F."/>
            <person name="Wakebe H."/>
            <person name="Hishigaki H."/>
            <person name="Watanabe T."/>
            <person name="Sugiyama A."/>
            <person name="Takemoto M."/>
            <person name="Kawakami B."/>
            <person name="Yamazaki M."/>
            <person name="Watanabe K."/>
            <person name="Kumagai A."/>
            <person name="Itakura S."/>
            <person name="Fukuzumi Y."/>
            <person name="Fujimori Y."/>
            <person name="Komiyama M."/>
            <person name="Tashiro H."/>
            <person name="Tanigami A."/>
            <person name="Fujiwara T."/>
            <person name="Ono T."/>
            <person name="Yamada K."/>
            <person name="Fujii Y."/>
            <person name="Ozaki K."/>
            <person name="Hirao M."/>
            <person name="Ohmori Y."/>
            <person name="Kawabata A."/>
            <person name="Hikiji T."/>
            <person name="Kobatake N."/>
            <person name="Inagaki H."/>
            <person name="Ikema Y."/>
            <person name="Okamoto S."/>
            <person name="Okitani R."/>
            <person name="Kawakami T."/>
            <person name="Noguchi S."/>
            <person name="Itoh T."/>
            <person name="Shigeta K."/>
            <person name="Senba T."/>
            <person name="Matsumura K."/>
            <person name="Nakajima Y."/>
            <person name="Mizuno T."/>
            <person name="Morinaga M."/>
            <person name="Sasaki M."/>
            <person name="Togashi T."/>
            <person name="Oyama M."/>
            <person name="Hata H."/>
            <person name="Watanabe M."/>
            <person name="Komatsu T."/>
            <person name="Mizushima-Sugano J."/>
            <person name="Satoh T."/>
            <person name="Shirai Y."/>
            <person name="Takahashi Y."/>
            <person name="Nakagawa K."/>
            <person name="Okumura K."/>
            <person name="Nagase T."/>
            <person name="Nomura N."/>
            <person name="Kikuchi H."/>
            <person name="Masuho Y."/>
            <person name="Yamashita R."/>
            <person name="Nakai K."/>
            <person name="Yada T."/>
            <person name="Nakamura Y."/>
            <person name="Ohara O."/>
            <person name="Isogai T."/>
            <person name="Sugano S."/>
        </authorList>
    </citation>
    <scope>NUCLEOTIDE SEQUENCE [LARGE SCALE MRNA] (ISOFORM 1)</scope>
</reference>
<reference key="4">
    <citation type="journal article" date="2007" name="BMC Genomics">
        <title>The full-ORF clone resource of the German cDNA consortium.</title>
        <authorList>
            <person name="Bechtel S."/>
            <person name="Rosenfelder H."/>
            <person name="Duda A."/>
            <person name="Schmidt C.P."/>
            <person name="Ernst U."/>
            <person name="Wellenreuther R."/>
            <person name="Mehrle A."/>
            <person name="Schuster C."/>
            <person name="Bahr A."/>
            <person name="Bloecker H."/>
            <person name="Heubner D."/>
            <person name="Hoerlein A."/>
            <person name="Michel G."/>
            <person name="Wedler H."/>
            <person name="Koehrer K."/>
            <person name="Ottenwaelder B."/>
            <person name="Poustka A."/>
            <person name="Wiemann S."/>
            <person name="Schupp I."/>
        </authorList>
    </citation>
    <scope>NUCLEOTIDE SEQUENCE [LARGE SCALE MRNA] (ISOFORM 1)</scope>
    <source>
        <tissue>Testis</tissue>
    </source>
</reference>
<reference key="5">
    <citation type="submission" date="2005-09" db="EMBL/GenBank/DDBJ databases">
        <authorList>
            <person name="Mural R.J."/>
            <person name="Istrail S."/>
            <person name="Sutton G.G."/>
            <person name="Florea L."/>
            <person name="Halpern A.L."/>
            <person name="Mobarry C.M."/>
            <person name="Lippert R."/>
            <person name="Walenz B."/>
            <person name="Shatkay H."/>
            <person name="Dew I."/>
            <person name="Miller J.R."/>
            <person name="Flanigan M.J."/>
            <person name="Edwards N.J."/>
            <person name="Bolanos R."/>
            <person name="Fasulo D."/>
            <person name="Halldorsson B.V."/>
            <person name="Hannenhalli S."/>
            <person name="Turner R."/>
            <person name="Yooseph S."/>
            <person name="Lu F."/>
            <person name="Nusskern D.R."/>
            <person name="Shue B.C."/>
            <person name="Zheng X.H."/>
            <person name="Zhong F."/>
            <person name="Delcher A.L."/>
            <person name="Huson D.H."/>
            <person name="Kravitz S.A."/>
            <person name="Mouchard L."/>
            <person name="Reinert K."/>
            <person name="Remington K.A."/>
            <person name="Clark A.G."/>
            <person name="Waterman M.S."/>
            <person name="Eichler E.E."/>
            <person name="Adams M.D."/>
            <person name="Hunkapiller M.W."/>
            <person name="Myers E.W."/>
            <person name="Venter J.C."/>
        </authorList>
    </citation>
    <scope>NUCLEOTIDE SEQUENCE [LARGE SCALE GENOMIC DNA]</scope>
</reference>
<reference key="6">
    <citation type="journal article" date="2004" name="Genome Res.">
        <title>The status, quality, and expansion of the NIH full-length cDNA project: the Mammalian Gene Collection (MGC).</title>
        <authorList>
            <consortium name="The MGC Project Team"/>
        </authorList>
    </citation>
    <scope>NUCLEOTIDE SEQUENCE [LARGE SCALE MRNA] (ISOFORM 1)</scope>
    <scope>NUCLEOTIDE SEQUENCE [LARGE SCALE MRNA] OF 100-713 (ISOFORM 2)</scope>
    <source>
        <tissue>Lung</tissue>
    </source>
</reference>
<reference key="7">
    <citation type="submission" date="1999-07" db="EMBL/GenBank/DDBJ databases">
        <authorList>
            <person name="Lu H."/>
            <person name="Liu B.H."/>
            <person name="Qin B.M."/>
            <person name="Sheng H."/>
            <person name="Zhang Q."/>
            <person name="Liu Y.Q."/>
            <person name="Zhao B."/>
            <person name="Liu B."/>
            <person name="Wang X.Y."/>
            <person name="Song L."/>
            <person name="Ji X.J."/>
            <person name="Xu H.S."/>
            <person name="Chen J.Z."/>
            <person name="Zheng W.Y."/>
            <person name="Teng C.Y."/>
            <person name="Liu Q."/>
            <person name="Yu L.T."/>
            <person name="Lin J."/>
            <person name="Gong J."/>
            <person name="Gao R.L."/>
            <person name="Hui R.T."/>
        </authorList>
    </citation>
    <scope>NUCLEOTIDE SEQUENCE [LARGE SCALE MRNA] OF 136-713 (ISOFORM 1)</scope>
    <source>
        <tissue>Aorta</tissue>
    </source>
</reference>
<reference key="8">
    <citation type="journal article" date="2004" name="Proc. Natl. Acad. Sci. U.S.A.">
        <title>Large-scale cDNA transfection screening for genes related to cancer development and progression.</title>
        <authorList>
            <person name="Wan D."/>
            <person name="Gong Y."/>
            <person name="Qin W."/>
            <person name="Zhang P."/>
            <person name="Li J."/>
            <person name="Wei L."/>
            <person name="Zhou X."/>
            <person name="Li H."/>
            <person name="Qiu X."/>
            <person name="Zhong F."/>
            <person name="He L."/>
            <person name="Yu J."/>
            <person name="Yao G."/>
            <person name="Jiang H."/>
            <person name="Qian L."/>
            <person name="Yu Y."/>
            <person name="Shu H."/>
            <person name="Chen X."/>
            <person name="Xu H."/>
            <person name="Guo M."/>
            <person name="Pan Z."/>
            <person name="Chen Y."/>
            <person name="Ge C."/>
            <person name="Yang S."/>
            <person name="Gu J."/>
        </authorList>
    </citation>
    <scope>NUCLEOTIDE SEQUENCE [LARGE SCALE MRNA] OF 329-713 (ISOFORM 1)</scope>
</reference>
<reference key="9">
    <citation type="journal article" date="1997" name="Genome Res.">
        <title>Large-scale concatenation cDNA sequencing.</title>
        <authorList>
            <person name="Yu W."/>
            <person name="Andersson B."/>
            <person name="Worley K.C."/>
            <person name="Muzny D.M."/>
            <person name="Ding Y."/>
            <person name="Liu W."/>
            <person name="Ricafrente J.Y."/>
            <person name="Wentland M.A."/>
            <person name="Lennon G."/>
            <person name="Gibbs R.A."/>
        </authorList>
    </citation>
    <scope>NUCLEOTIDE SEQUENCE [LARGE SCALE MRNA] OF 359-713 (ISOFORM 1)</scope>
    <source>
        <tissue>Brain</tissue>
    </source>
</reference>
<reference key="10">
    <citation type="journal article" date="2000" name="Biochemistry">
        <title>A novel low-density lipoprotein receptor-related protein mediating cellular uptake of apolipoprotein E-enriched beta-VLDL in vitro.</title>
        <authorList>
            <person name="Sugiyama T."/>
            <person name="Kumagai H."/>
            <person name="Morikawa Y."/>
            <person name="Wada Y."/>
            <person name="Sugiyama A."/>
            <person name="Yasuda K."/>
            <person name="Yokoi N."/>
            <person name="Tamura S."/>
            <person name="Kojima T."/>
            <person name="Nosaka T."/>
            <person name="Senba E."/>
            <person name="Kimura S."/>
            <person name="Kadowaki T."/>
            <person name="Kodama T."/>
            <person name="Kitamura T."/>
        </authorList>
    </citation>
    <scope>TISSUE SPECIFICITY</scope>
</reference>
<reference key="11">
    <citation type="journal article" date="2008" name="Mol. Cell">
        <title>Kinase-selective enrichment enables quantitative phosphoproteomics of the kinome across the cell cycle.</title>
        <authorList>
            <person name="Daub H."/>
            <person name="Olsen J.V."/>
            <person name="Bairlein M."/>
            <person name="Gnad F."/>
            <person name="Oppermann F.S."/>
            <person name="Korner R."/>
            <person name="Greff Z."/>
            <person name="Keri G."/>
            <person name="Stemmann O."/>
            <person name="Mann M."/>
        </authorList>
    </citation>
    <scope>IDENTIFICATION BY MASS SPECTROMETRY [LARGE SCALE ANALYSIS]</scope>
    <source>
        <tissue>Cervix carcinoma</tissue>
    </source>
</reference>
<reference key="12">
    <citation type="journal article" date="2008" name="Proc. Natl. Acad. Sci. U.S.A.">
        <title>A quantitative atlas of mitotic phosphorylation.</title>
        <authorList>
            <person name="Dephoure N."/>
            <person name="Zhou C."/>
            <person name="Villen J."/>
            <person name="Beausoleil S.A."/>
            <person name="Bakalarski C.E."/>
            <person name="Elledge S.J."/>
            <person name="Gygi S.P."/>
        </authorList>
    </citation>
    <scope>PHOSPHORYLATION [LARGE SCALE ANALYSIS] AT THR-596</scope>
    <scope>IDENTIFICATION BY MASS SPECTROMETRY [LARGE SCALE ANALYSIS]</scope>
    <source>
        <tissue>Cervix carcinoma</tissue>
    </source>
</reference>
<reference key="13">
    <citation type="journal article" date="2010" name="Sci. Signal.">
        <title>Quantitative phosphoproteomics reveals widespread full phosphorylation site occupancy during mitosis.</title>
        <authorList>
            <person name="Olsen J.V."/>
            <person name="Vermeulen M."/>
            <person name="Santamaria A."/>
            <person name="Kumar C."/>
            <person name="Miller M.L."/>
            <person name="Jensen L.J."/>
            <person name="Gnad F."/>
            <person name="Cox J."/>
            <person name="Jensen T.S."/>
            <person name="Nigg E.A."/>
            <person name="Brunak S."/>
            <person name="Mann M."/>
        </authorList>
    </citation>
    <scope>IDENTIFICATION BY MASS SPECTROMETRY [LARGE SCALE ANALYSIS]</scope>
    <source>
        <tissue>Cervix carcinoma</tissue>
    </source>
</reference>
<gene>
    <name type="primary">LRP10</name>
    <name type="ORF">MSTP087</name>
    <name type="ORF">SP220</name>
    <name type="ORF">UNQ389/PRO724</name>
</gene>
<feature type="signal peptide" evidence="2">
    <location>
        <begin position="1"/>
        <end position="16"/>
    </location>
</feature>
<feature type="chain" id="PRO_0000017335" description="Low-density lipoprotein receptor-related protein 10">
    <location>
        <begin position="17"/>
        <end position="713"/>
    </location>
</feature>
<feature type="topological domain" description="Extracellular" evidence="2">
    <location>
        <begin position="17"/>
        <end position="440"/>
    </location>
</feature>
<feature type="transmembrane region" description="Helical" evidence="2">
    <location>
        <begin position="441"/>
        <end position="461"/>
    </location>
</feature>
<feature type="topological domain" description="Cytoplasmic" evidence="2">
    <location>
        <begin position="462"/>
        <end position="713"/>
    </location>
</feature>
<feature type="domain" description="CUB 1" evidence="3">
    <location>
        <begin position="28"/>
        <end position="136"/>
    </location>
</feature>
<feature type="domain" description="LDL-receptor class A 1" evidence="4">
    <location>
        <begin position="139"/>
        <end position="175"/>
    </location>
</feature>
<feature type="domain" description="CUB 2" evidence="3">
    <location>
        <begin position="192"/>
        <end position="305"/>
    </location>
</feature>
<feature type="domain" description="LDL-receptor class A 2" evidence="4">
    <location>
        <begin position="307"/>
        <end position="354"/>
    </location>
</feature>
<feature type="domain" description="LDL-receptor class A 3" evidence="4">
    <location>
        <begin position="355"/>
        <end position="397"/>
    </location>
</feature>
<feature type="domain" description="LDL-receptor class A 4" evidence="4">
    <location>
        <begin position="398"/>
        <end position="434"/>
    </location>
</feature>
<feature type="region of interest" description="Disordered" evidence="5">
    <location>
        <begin position="564"/>
        <end position="637"/>
    </location>
</feature>
<feature type="compositionally biased region" description="Polar residues" evidence="5">
    <location>
        <begin position="569"/>
        <end position="584"/>
    </location>
</feature>
<feature type="compositionally biased region" description="Low complexity" evidence="5">
    <location>
        <begin position="621"/>
        <end position="636"/>
    </location>
</feature>
<feature type="modified residue" description="Phosphothreonine" evidence="9">
    <location>
        <position position="596"/>
    </location>
</feature>
<feature type="glycosylation site" description="N-linked (GlcNAc...) asparagine" evidence="2">
    <location>
        <position position="56"/>
    </location>
</feature>
<feature type="glycosylation site" description="N-linked (GlcNAc...) asparagine" evidence="2">
    <location>
        <position position="111"/>
    </location>
</feature>
<feature type="glycosylation site" description="N-linked (GlcNAc...) asparagine" evidence="2">
    <location>
        <position position="193"/>
    </location>
</feature>
<feature type="glycosylation site" description="N-linked (GlcNAc...) asparagine" evidence="2">
    <location>
        <position position="299"/>
    </location>
</feature>
<feature type="disulfide bond" evidence="1">
    <location>
        <begin position="28"/>
        <end position="57"/>
    </location>
</feature>
<feature type="disulfide bond" evidence="1">
    <location>
        <begin position="80"/>
        <end position="98"/>
    </location>
</feature>
<feature type="disulfide bond" evidence="1">
    <location>
        <begin position="140"/>
        <end position="152"/>
    </location>
</feature>
<feature type="disulfide bond" evidence="1">
    <location>
        <begin position="147"/>
        <end position="165"/>
    </location>
</feature>
<feature type="disulfide bond" evidence="1">
    <location>
        <begin position="159"/>
        <end position="174"/>
    </location>
</feature>
<feature type="disulfide bond" evidence="1">
    <location>
        <begin position="192"/>
        <end position="220"/>
    </location>
</feature>
<feature type="disulfide bond" evidence="1">
    <location>
        <begin position="308"/>
        <end position="331"/>
    </location>
</feature>
<feature type="disulfide bond" evidence="1">
    <location>
        <begin position="315"/>
        <end position="344"/>
    </location>
</feature>
<feature type="disulfide bond" evidence="1">
    <location>
        <begin position="338"/>
        <end position="353"/>
    </location>
</feature>
<feature type="disulfide bond" evidence="1">
    <location>
        <begin position="356"/>
        <end position="374"/>
    </location>
</feature>
<feature type="disulfide bond" evidence="1">
    <location>
        <begin position="363"/>
        <end position="387"/>
    </location>
</feature>
<feature type="disulfide bond" evidence="1">
    <location>
        <begin position="381"/>
        <end position="396"/>
    </location>
</feature>
<feature type="disulfide bond" evidence="1">
    <location>
        <begin position="399"/>
        <end position="411"/>
    </location>
</feature>
<feature type="disulfide bond" evidence="1">
    <location>
        <begin position="406"/>
        <end position="424"/>
    </location>
</feature>
<feature type="disulfide bond" evidence="1">
    <location>
        <begin position="418"/>
        <end position="433"/>
    </location>
</feature>
<feature type="splice variant" id="VSP_009820" description="In isoform 2." evidence="7">
    <location>
        <begin position="557"/>
        <end position="713"/>
    </location>
</feature>
<feature type="sequence variant" id="VAR_018172" description="In dbSNP:rs2273837.">
    <original>R</original>
    <variation>W</variation>
    <location>
        <position position="48"/>
    </location>
</feature>
<feature type="sequence variant" id="VAR_034097" description="In dbSNP:rs28534929.">
    <original>M</original>
    <variation>V</variation>
    <location>
        <position position="139"/>
    </location>
</feature>
<feature type="sequence conflict" description="In Ref. 8." evidence="8" ref="8">
    <original>A</original>
    <variation>T</variation>
    <location>
        <position position="365"/>
    </location>
</feature>
<feature type="sequence conflict" description="In Ref. 8." evidence="8" ref="8">
    <original>S</original>
    <variation>C</variation>
    <location>
        <position position="434"/>
    </location>
</feature>
<feature type="sequence conflict" description="In Ref. 4; CAB45753." evidence="8" ref="4">
    <original>R</original>
    <variation>H</variation>
    <location>
        <position position="558"/>
    </location>
</feature>
<evidence type="ECO:0000250" key="1"/>
<evidence type="ECO:0000255" key="2"/>
<evidence type="ECO:0000255" key="3">
    <source>
        <dbReference type="PROSITE-ProRule" id="PRU00059"/>
    </source>
</evidence>
<evidence type="ECO:0000255" key="4">
    <source>
        <dbReference type="PROSITE-ProRule" id="PRU00124"/>
    </source>
</evidence>
<evidence type="ECO:0000256" key="5">
    <source>
        <dbReference type="SAM" id="MobiDB-lite"/>
    </source>
</evidence>
<evidence type="ECO:0000269" key="6">
    <source>
    </source>
</evidence>
<evidence type="ECO:0000303" key="7">
    <source>
    </source>
</evidence>
<evidence type="ECO:0000305" key="8"/>
<evidence type="ECO:0007744" key="9">
    <source>
    </source>
</evidence>
<accession>Q7Z4F1</accession>
<accession>A8K4R5</accession>
<accession>D3DS31</accession>
<accession>O95882</accession>
<accession>Q14CK7</accession>
<accession>Q86T02</accession>
<accession>Q8NCZ4</accession>
<accession>Q9HC42</accession>
<accession>Q9UG33</accession>
<sequence>MLLATLLLLLLGGALAHPDRIIFPNHACEDPPAVLLEVQGTLQRPLVRDSRTSPANCTWLILGSKEQTVTIRFQKLHLACGSERLTLRSPLQPLISLCEAPPSPLQLPGGNVTITYSYAGARAPMGQGFLLSYSQDWLMCLQEEFQCLNHRCVSAVQRCDGVDACGDGSDEAGCSSDPFPGLTPRPVPSLPCNVTLEDFYGVFSSPGYTHLASVSHPQSCHWLLDPHDGRRLAVRFTALDLGFGDAVHVYDGPGPPESSRLLRSLTHFSNGKAVTVETLSGQAVVSYHTVAWSNGRGFNATYHVRGYCLPWDRPCGLGSGLGAGEGLGERCYSEAQRCDGSWDCADGTDEEDCPGCPPGHFPCGAAGTSGATACYLPADRCNYQTFCADGADERRCRHCQPGNFRCRDEKCVYETWVCDGQPDCADGSDEWDCSYVLPRKVITAAVIGSLVCGLLLVIALGCTCKLYAIRTQEYSIFAPLSRMEAEIVQQQAPPSYGQLIAQGAIPPVEDFPTENPNDNSVLGNLRSLLQILRQDMTPGGGPGARRRQRGRLMRRLVRRLRRWGLLPRTNTPARASEARSQVTPSAAPLEALDGGTGPAREGGAVGGQDGEQAPPLPIKAPLPSASTSPAPTTVPEAPGPLPSLPLEPSLLSGVVQALRGRLLPSLGPPGPTRSPPGPHTAVLALEDEDDVLLVPLAEPGVWVAEAEDEPLLT</sequence>
<comment type="function">
    <text evidence="1">Probable receptor, which is involved in the internalization of lipophilic molecules and/or signal transduction. May be involved in the uptake of lipoprotein APOE in liver (By similarity).</text>
</comment>
<comment type="interaction">
    <interactant intactId="EBI-2830349">
        <id>Q7Z4F1</id>
    </interactant>
    <interactant intactId="EBI-707714">
        <id>Q92843</id>
        <label>BCL2L2</label>
    </interactant>
    <organismsDiffer>false</organismsDiffer>
    <experiments>3</experiments>
</comment>
<comment type="interaction">
    <interactant intactId="EBI-2830349">
        <id>Q7Z4F1</id>
    </interactant>
    <interactant intactId="EBI-1045797">
        <id>Q8N5K1</id>
        <label>CISD2</label>
    </interactant>
    <organismsDiffer>false</organismsDiffer>
    <experiments>3</experiments>
</comment>
<comment type="interaction">
    <interactant intactId="EBI-2830349">
        <id>Q7Z4F1</id>
    </interactant>
    <interactant intactId="EBI-3915253">
        <id>Q15125</id>
        <label>EBP</label>
    </interactant>
    <organismsDiffer>false</organismsDiffer>
    <experiments>3</experiments>
</comment>
<comment type="interaction">
    <interactant intactId="EBI-2830349">
        <id>Q7Z4F1</id>
    </interactant>
    <interactant intactId="EBI-18304435">
        <id>Q5JX71</id>
        <label>FAM209A</label>
    </interactant>
    <organismsDiffer>false</organismsDiffer>
    <experiments>3</experiments>
</comment>
<comment type="interaction">
    <interactant intactId="EBI-2830349">
        <id>Q7Z4F1</id>
    </interactant>
    <interactant intactId="EBI-12887376">
        <id>Q96LL3</id>
        <label>FIMP</label>
    </interactant>
    <organismsDiffer>false</organismsDiffer>
    <experiments>3</experiments>
</comment>
<comment type="interaction">
    <interactant intactId="EBI-2830349">
        <id>Q7Z4F1</id>
    </interactant>
    <interactant intactId="EBI-3909454">
        <id>O95377</id>
        <label>GJB5</label>
    </interactant>
    <organismsDiffer>false</organismsDiffer>
    <experiments>3</experiments>
</comment>
<comment type="interaction">
    <interactant intactId="EBI-2830349">
        <id>Q7Z4F1</id>
    </interactant>
    <interactant intactId="EBI-3917143">
        <id>Q5T7V8</id>
        <label>GORAB</label>
    </interactant>
    <organismsDiffer>false</organismsDiffer>
    <experiments>3</experiments>
</comment>
<comment type="interaction">
    <interactant intactId="EBI-2830349">
        <id>Q7Z4F1</id>
    </interactant>
    <interactant intactId="EBI-373355">
        <id>Q5SR56</id>
        <label>MFSD14B</label>
    </interactant>
    <organismsDiffer>false</organismsDiffer>
    <experiments>3</experiments>
</comment>
<comment type="interaction">
    <interactant intactId="EBI-2830349">
        <id>Q7Z4F1</id>
    </interactant>
    <interactant intactId="EBI-724754">
        <id>O14880</id>
        <label>MGST3</label>
    </interactant>
    <organismsDiffer>false</organismsDiffer>
    <experiments>3</experiments>
</comment>
<comment type="interaction">
    <interactant intactId="EBI-2830349">
        <id>Q7Z4F1</id>
    </interactant>
    <interactant intactId="EBI-8449636">
        <id>P30301</id>
        <label>MIP</label>
    </interactant>
    <organismsDiffer>false</organismsDiffer>
    <experiments>3</experiments>
</comment>
<comment type="interaction">
    <interactant intactId="EBI-2830349">
        <id>Q7Z4F1</id>
    </interactant>
    <interactant intactId="EBI-750085">
        <id>Q9Y676</id>
        <label>MRPS18B</label>
    </interactant>
    <organismsDiffer>false</organismsDiffer>
    <experiments>3</experiments>
</comment>
<comment type="interaction">
    <interactant intactId="EBI-2830349">
        <id>Q7Z4F1</id>
    </interactant>
    <interactant intactId="EBI-17490746">
        <id>A8MTQ0</id>
        <label>NOTO</label>
    </interactant>
    <organismsDiffer>false</organismsDiffer>
    <experiments>3</experiments>
</comment>
<comment type="interaction">
    <interactant intactId="EBI-2830349">
        <id>Q7Z4F1</id>
    </interactant>
    <interactant intactId="EBI-16427978">
        <id>Q9BQ51</id>
        <label>PDCD1LG2</label>
    </interactant>
    <organismsDiffer>false</organismsDiffer>
    <experiments>3</experiments>
</comment>
<comment type="interaction">
    <interactant intactId="EBI-2830349">
        <id>Q7Z4F1</id>
    </interactant>
    <interactant intactId="EBI-949945">
        <id>Q53GL0</id>
        <label>PLEKHO1</label>
    </interactant>
    <organismsDiffer>false</organismsDiffer>
    <experiments>3</experiments>
</comment>
<comment type="interaction">
    <interactant intactId="EBI-2830349">
        <id>Q7Z4F1</id>
    </interactant>
    <interactant intactId="EBI-3923031">
        <id>Q14973</id>
        <label>SLC10A1</label>
    </interactant>
    <organismsDiffer>false</organismsDiffer>
    <experiments>3</experiments>
</comment>
<comment type="interaction">
    <interactant intactId="EBI-2830349">
        <id>Q7Z4F1</id>
    </interactant>
    <interactant intactId="EBI-1573290">
        <id>Q15849</id>
        <label>SLC14A2</label>
    </interactant>
    <organismsDiffer>false</organismsDiffer>
    <experiments>3</experiments>
</comment>
<comment type="interaction">
    <interactant intactId="EBI-2830349">
        <id>Q7Z4F1</id>
    </interactant>
    <interactant intactId="EBI-12188413">
        <id>B2RUZ4</id>
        <label>SMIM1</label>
    </interactant>
    <organismsDiffer>false</organismsDiffer>
    <experiments>3</experiments>
</comment>
<comment type="interaction">
    <interactant intactId="EBI-2830349">
        <id>Q7Z4F1</id>
    </interactant>
    <interactant intactId="EBI-949146">
        <id>Q969X2</id>
        <label>ST6GALNAC6</label>
    </interactant>
    <organismsDiffer>false</organismsDiffer>
    <experiments>3</experiments>
</comment>
<comment type="interaction">
    <interactant intactId="EBI-2830349">
        <id>Q7Z4F1</id>
    </interactant>
    <interactant intactId="EBI-11724423">
        <id>Q7Z7N9</id>
        <label>TMEM179B</label>
    </interactant>
    <organismsDiffer>false</organismsDiffer>
    <experiments>3</experiments>
</comment>
<comment type="interaction">
    <interactant intactId="EBI-2830349">
        <id>Q7Z4F1</id>
    </interactant>
    <interactant intactId="EBI-10982110">
        <id>Q96Q45-2</id>
        <label>TMEM237</label>
    </interactant>
    <organismsDiffer>false</organismsDiffer>
    <experiments>3</experiments>
</comment>
<comment type="interaction">
    <interactant intactId="EBI-2830349">
        <id>Q7Z4F1</id>
    </interactant>
    <interactant intactId="EBI-12887458">
        <id>Q9BU79</id>
        <label>TMEM243</label>
    </interactant>
    <organismsDiffer>false</organismsDiffer>
    <experiments>3</experiments>
</comment>
<comment type="subcellular location">
    <subcellularLocation>
        <location evidence="8">Membrane</location>
        <topology evidence="8">Single-pass type I membrane protein</topology>
    </subcellularLocation>
    <subcellularLocation>
        <location evidence="1">Membrane</location>
        <location evidence="1">Coated pit</location>
    </subcellularLocation>
</comment>
<comment type="alternative products">
    <event type="alternative splicing"/>
    <isoform>
        <id>Q7Z4F1-1</id>
        <name>1</name>
        <sequence type="displayed"/>
    </isoform>
    <isoform>
        <id>Q7Z4F1-2</id>
        <name>2</name>
        <sequence type="described" ref="VSP_009820"/>
    </isoform>
</comment>
<comment type="tissue specificity">
    <text evidence="6">Expressed in blood leukocyte, lung, placenta, small intestine, liver, kidney, spleen, thymus, colon, skeletal muscle and heart.</text>
</comment>
<comment type="similarity">
    <text evidence="8">Belongs to the LDLR family.</text>
</comment>
<comment type="sequence caution" evidence="8">
    <conflict type="erroneous initiation">
        <sequence resource="EMBL-CDS" id="AAD20037"/>
    </conflict>
</comment>
<comment type="sequence caution" evidence="8">
    <conflict type="frameshift">
        <sequence resource="EMBL-CDS" id="AAG17980"/>
    </conflict>
</comment>
<comment type="sequence caution" evidence="8">
    <conflict type="frameshift">
        <sequence resource="EMBL-CDS" id="AAQ13610"/>
    </conflict>
</comment>
<comment type="sequence caution" evidence="8">
    <conflict type="miscellaneous discrepancy">
        <sequence resource="EMBL-CDS" id="CAD39174"/>
    </conflict>
    <text>Chimera.</text>
</comment>
<protein>
    <recommendedName>
        <fullName>Low-density lipoprotein receptor-related protein 10</fullName>
        <shortName>LRP-10</shortName>
    </recommendedName>
</protein>
<dbReference type="EMBL" id="AY358399">
    <property type="protein sequence ID" value="AAQ88765.1"/>
    <property type="molecule type" value="mRNA"/>
</dbReference>
<dbReference type="EMBL" id="BX161500">
    <property type="protein sequence ID" value="CAD61944.1"/>
    <property type="molecule type" value="mRNA"/>
</dbReference>
<dbReference type="EMBL" id="AK291030">
    <property type="protein sequence ID" value="BAF83719.1"/>
    <property type="molecule type" value="mRNA"/>
</dbReference>
<dbReference type="EMBL" id="AL080164">
    <property type="protein sequence ID" value="CAB45753.1"/>
    <property type="molecule type" value="mRNA"/>
</dbReference>
<dbReference type="EMBL" id="AL834518">
    <property type="protein sequence ID" value="CAD39174.2"/>
    <property type="status" value="ALT_SEQ"/>
    <property type="molecule type" value="mRNA"/>
</dbReference>
<dbReference type="EMBL" id="CH471078">
    <property type="protein sequence ID" value="EAW66232.1"/>
    <property type="molecule type" value="Genomic_DNA"/>
</dbReference>
<dbReference type="EMBL" id="CH471078">
    <property type="protein sequence ID" value="EAW66235.1"/>
    <property type="molecule type" value="Genomic_DNA"/>
</dbReference>
<dbReference type="EMBL" id="BC064901">
    <property type="protein sequence ID" value="AAH64901.1"/>
    <property type="molecule type" value="mRNA"/>
</dbReference>
<dbReference type="EMBL" id="BC113714">
    <property type="protein sequence ID" value="AAI13715.1"/>
    <property type="molecule type" value="mRNA"/>
</dbReference>
<dbReference type="EMBL" id="BC113716">
    <property type="protein sequence ID" value="AAI13717.1"/>
    <property type="molecule type" value="mRNA"/>
</dbReference>
<dbReference type="EMBL" id="AF172816">
    <property type="protein sequence ID" value="AAQ13610.1"/>
    <property type="status" value="ALT_FRAME"/>
    <property type="molecule type" value="mRNA"/>
</dbReference>
<dbReference type="EMBL" id="AF177336">
    <property type="protein sequence ID" value="AAG17980.1"/>
    <property type="status" value="ALT_FRAME"/>
    <property type="molecule type" value="mRNA"/>
</dbReference>
<dbReference type="EMBL" id="AF131760">
    <property type="protein sequence ID" value="AAD20037.1"/>
    <property type="status" value="ALT_INIT"/>
    <property type="molecule type" value="mRNA"/>
</dbReference>
<dbReference type="CCDS" id="CCDS86372.1">
    <molecule id="Q7Z4F1-2"/>
</dbReference>
<dbReference type="CCDS" id="CCDS9578.1">
    <molecule id="Q7Z4F1-1"/>
</dbReference>
<dbReference type="PIR" id="T12469">
    <property type="entry name" value="T12469"/>
</dbReference>
<dbReference type="RefSeq" id="NP_001316155.1">
    <molecule id="Q7Z4F1-2"/>
    <property type="nucleotide sequence ID" value="NM_001329226.2"/>
</dbReference>
<dbReference type="RefSeq" id="NP_054764.2">
    <molecule id="Q7Z4F1-1"/>
    <property type="nucleotide sequence ID" value="NM_014045.4"/>
</dbReference>
<dbReference type="SMR" id="Q7Z4F1"/>
<dbReference type="BioGRID" id="117491">
    <property type="interactions" value="135"/>
</dbReference>
<dbReference type="FunCoup" id="Q7Z4F1">
    <property type="interactions" value="1188"/>
</dbReference>
<dbReference type="IntAct" id="Q7Z4F1">
    <property type="interactions" value="108"/>
</dbReference>
<dbReference type="MINT" id="Q7Z4F1"/>
<dbReference type="STRING" id="9606.ENSP00000352601"/>
<dbReference type="GlyConnect" id="1465">
    <property type="glycosylation" value="1 N-Linked glycan (1 site)"/>
</dbReference>
<dbReference type="GlyCosmos" id="Q7Z4F1">
    <property type="glycosylation" value="4 sites, 1 glycan"/>
</dbReference>
<dbReference type="GlyGen" id="Q7Z4F1">
    <property type="glycosylation" value="6 sites, 6 N-linked glycans (2 sites)"/>
</dbReference>
<dbReference type="iPTMnet" id="Q7Z4F1"/>
<dbReference type="PhosphoSitePlus" id="Q7Z4F1"/>
<dbReference type="SwissPalm" id="Q7Z4F1"/>
<dbReference type="BioMuta" id="LRP10"/>
<dbReference type="DMDM" id="46396347"/>
<dbReference type="jPOST" id="Q7Z4F1"/>
<dbReference type="MassIVE" id="Q7Z4F1"/>
<dbReference type="PaxDb" id="9606-ENSP00000352601"/>
<dbReference type="PeptideAtlas" id="Q7Z4F1"/>
<dbReference type="ProteomicsDB" id="69172">
    <molecule id="Q7Z4F1-1"/>
</dbReference>
<dbReference type="ProteomicsDB" id="69173">
    <molecule id="Q7Z4F1-2"/>
</dbReference>
<dbReference type="Pumba" id="Q7Z4F1"/>
<dbReference type="Antibodypedia" id="95">
    <property type="antibodies" value="107 antibodies from 24 providers"/>
</dbReference>
<dbReference type="DNASU" id="26020"/>
<dbReference type="Ensembl" id="ENST00000359591.9">
    <molecule id="Q7Z4F1-1"/>
    <property type="protein sequence ID" value="ENSP00000352601.4"/>
    <property type="gene ID" value="ENSG00000197324.9"/>
</dbReference>
<dbReference type="Ensembl" id="ENST00000546834.5">
    <molecule id="Q7Z4F1-2"/>
    <property type="protein sequence ID" value="ENSP00000447559.1"/>
    <property type="gene ID" value="ENSG00000197324.9"/>
</dbReference>
<dbReference type="GeneID" id="26020"/>
<dbReference type="KEGG" id="hsa:26020"/>
<dbReference type="MANE-Select" id="ENST00000359591.9">
    <property type="protein sequence ID" value="ENSP00000352601.4"/>
    <property type="RefSeq nucleotide sequence ID" value="NM_014045.5"/>
    <property type="RefSeq protein sequence ID" value="NP_054764.2"/>
</dbReference>
<dbReference type="UCSC" id="uc001whd.4">
    <molecule id="Q7Z4F1-1"/>
    <property type="organism name" value="human"/>
</dbReference>
<dbReference type="AGR" id="HGNC:14553"/>
<dbReference type="CTD" id="26020"/>
<dbReference type="DisGeNET" id="26020"/>
<dbReference type="GeneCards" id="LRP10"/>
<dbReference type="HGNC" id="HGNC:14553">
    <property type="gene designation" value="LRP10"/>
</dbReference>
<dbReference type="HPA" id="ENSG00000197324">
    <property type="expression patterns" value="Low tissue specificity"/>
</dbReference>
<dbReference type="MalaCards" id="LRP10"/>
<dbReference type="MIM" id="609921">
    <property type="type" value="gene"/>
</dbReference>
<dbReference type="neXtProt" id="NX_Q7Z4F1"/>
<dbReference type="OpenTargets" id="ENSG00000197324"/>
<dbReference type="PharmGKB" id="PA38383"/>
<dbReference type="VEuPathDB" id="HostDB:ENSG00000197324"/>
<dbReference type="eggNOG" id="KOG1215">
    <property type="taxonomic scope" value="Eukaryota"/>
</dbReference>
<dbReference type="GeneTree" id="ENSGT00940000160783"/>
<dbReference type="HOGENOM" id="CLU_013747_2_0_1"/>
<dbReference type="InParanoid" id="Q7Z4F1"/>
<dbReference type="OMA" id="GPADRCN"/>
<dbReference type="OrthoDB" id="9990982at2759"/>
<dbReference type="PAN-GO" id="Q7Z4F1">
    <property type="GO annotations" value="2 GO annotations based on evolutionary models"/>
</dbReference>
<dbReference type="PhylomeDB" id="Q7Z4F1"/>
<dbReference type="TreeFam" id="TF332149"/>
<dbReference type="PathwayCommons" id="Q7Z4F1"/>
<dbReference type="Reactome" id="R-HSA-975634">
    <property type="pathway name" value="Retinoid metabolism and transport"/>
</dbReference>
<dbReference type="SignaLink" id="Q7Z4F1"/>
<dbReference type="BioGRID-ORCS" id="26020">
    <property type="hits" value="19 hits in 1161 CRISPR screens"/>
</dbReference>
<dbReference type="ChiTaRS" id="LRP10">
    <property type="organism name" value="human"/>
</dbReference>
<dbReference type="GeneWiki" id="LRP10"/>
<dbReference type="GenomeRNAi" id="26020"/>
<dbReference type="Pharos" id="Q7Z4F1">
    <property type="development level" value="Tbio"/>
</dbReference>
<dbReference type="PRO" id="PR:Q7Z4F1"/>
<dbReference type="Proteomes" id="UP000005640">
    <property type="component" value="Chromosome 14"/>
</dbReference>
<dbReference type="RNAct" id="Q7Z4F1">
    <property type="molecule type" value="protein"/>
</dbReference>
<dbReference type="Bgee" id="ENSG00000197324">
    <property type="expression patterns" value="Expressed in stromal cell of endometrium and 204 other cell types or tissues"/>
</dbReference>
<dbReference type="ExpressionAtlas" id="Q7Z4F1">
    <property type="expression patterns" value="baseline and differential"/>
</dbReference>
<dbReference type="GO" id="GO:0005905">
    <property type="term" value="C:clathrin-coated pit"/>
    <property type="evidence" value="ECO:0007669"/>
    <property type="project" value="UniProtKB-KW"/>
</dbReference>
<dbReference type="GO" id="GO:0016020">
    <property type="term" value="C:membrane"/>
    <property type="evidence" value="ECO:0007005"/>
    <property type="project" value="UniProtKB"/>
</dbReference>
<dbReference type="GO" id="GO:0005886">
    <property type="term" value="C:plasma membrane"/>
    <property type="evidence" value="ECO:0000318"/>
    <property type="project" value="GO_Central"/>
</dbReference>
<dbReference type="GO" id="GO:0005041">
    <property type="term" value="F:low-density lipoprotein particle receptor activity"/>
    <property type="evidence" value="ECO:0000318"/>
    <property type="project" value="GO_Central"/>
</dbReference>
<dbReference type="GO" id="GO:0006897">
    <property type="term" value="P:endocytosis"/>
    <property type="evidence" value="ECO:0007669"/>
    <property type="project" value="UniProtKB-KW"/>
</dbReference>
<dbReference type="GO" id="GO:0048839">
    <property type="term" value="P:inner ear development"/>
    <property type="evidence" value="ECO:0007669"/>
    <property type="project" value="Ensembl"/>
</dbReference>
<dbReference type="GO" id="GO:0006629">
    <property type="term" value="P:lipid metabolic process"/>
    <property type="evidence" value="ECO:0007669"/>
    <property type="project" value="Ensembl"/>
</dbReference>
<dbReference type="GO" id="GO:0006869">
    <property type="term" value="P:lipid transport"/>
    <property type="evidence" value="ECO:0007669"/>
    <property type="project" value="Ensembl"/>
</dbReference>
<dbReference type="CDD" id="cd00041">
    <property type="entry name" value="CUB"/>
    <property type="match status" value="2"/>
</dbReference>
<dbReference type="CDD" id="cd00112">
    <property type="entry name" value="LDLa"/>
    <property type="match status" value="3"/>
</dbReference>
<dbReference type="FunFam" id="2.60.120.290:FF:000039">
    <property type="entry name" value="LDL receptor related protein 10"/>
    <property type="match status" value="1"/>
</dbReference>
<dbReference type="FunFam" id="2.60.120.290:FF:000063">
    <property type="entry name" value="LDL receptor related protein 10"/>
    <property type="match status" value="1"/>
</dbReference>
<dbReference type="FunFam" id="4.10.400.10:FF:000091">
    <property type="entry name" value="Low-density lipoprotein receptor (Ldl)"/>
    <property type="match status" value="1"/>
</dbReference>
<dbReference type="FunFam" id="4.10.400.10:FF:000055">
    <property type="entry name" value="Low-density lipoprotein receptor-related protein 10"/>
    <property type="match status" value="1"/>
</dbReference>
<dbReference type="FunFam" id="4.10.400.10:FF:000050">
    <property type="entry name" value="low-density lipoprotein receptor-related protein 10"/>
    <property type="match status" value="1"/>
</dbReference>
<dbReference type="Gene3D" id="4.10.400.10">
    <property type="entry name" value="Low-density Lipoprotein Receptor"/>
    <property type="match status" value="4"/>
</dbReference>
<dbReference type="Gene3D" id="2.60.120.290">
    <property type="entry name" value="Spermadhesin, CUB domain"/>
    <property type="match status" value="2"/>
</dbReference>
<dbReference type="InterPro" id="IPR000859">
    <property type="entry name" value="CUB_dom"/>
</dbReference>
<dbReference type="InterPro" id="IPR036055">
    <property type="entry name" value="LDL_receptor-like_sf"/>
</dbReference>
<dbReference type="InterPro" id="IPR050685">
    <property type="entry name" value="LDLR"/>
</dbReference>
<dbReference type="InterPro" id="IPR023415">
    <property type="entry name" value="LDLR_class-A_CS"/>
</dbReference>
<dbReference type="InterPro" id="IPR002172">
    <property type="entry name" value="LDrepeatLR_classA_rpt"/>
</dbReference>
<dbReference type="InterPro" id="IPR035914">
    <property type="entry name" value="Sperma_CUB_dom_sf"/>
</dbReference>
<dbReference type="PANTHER" id="PTHR24270">
    <property type="entry name" value="LOW-DENSITY LIPOPROTEIN RECEPTOR-RELATED"/>
    <property type="match status" value="1"/>
</dbReference>
<dbReference type="PANTHER" id="PTHR24270:SF17">
    <property type="entry name" value="LOW-DENSITY LIPOPROTEIN RECEPTOR-RELATED PROTEIN 10"/>
    <property type="match status" value="1"/>
</dbReference>
<dbReference type="Pfam" id="PF00431">
    <property type="entry name" value="CUB"/>
    <property type="match status" value="1"/>
</dbReference>
<dbReference type="Pfam" id="PF00057">
    <property type="entry name" value="Ldl_recept_a"/>
    <property type="match status" value="2"/>
</dbReference>
<dbReference type="PRINTS" id="PR00261">
    <property type="entry name" value="LDLRECEPTOR"/>
</dbReference>
<dbReference type="SMART" id="SM00042">
    <property type="entry name" value="CUB"/>
    <property type="match status" value="2"/>
</dbReference>
<dbReference type="SMART" id="SM00192">
    <property type="entry name" value="LDLa"/>
    <property type="match status" value="4"/>
</dbReference>
<dbReference type="SUPFAM" id="SSF57424">
    <property type="entry name" value="LDL receptor-like module"/>
    <property type="match status" value="2"/>
</dbReference>
<dbReference type="SUPFAM" id="SSF49854">
    <property type="entry name" value="Spermadhesin, CUB domain"/>
    <property type="match status" value="2"/>
</dbReference>
<dbReference type="PROSITE" id="PS01180">
    <property type="entry name" value="CUB"/>
    <property type="match status" value="1"/>
</dbReference>
<dbReference type="PROSITE" id="PS01209">
    <property type="entry name" value="LDLRA_1"/>
    <property type="match status" value="1"/>
</dbReference>
<dbReference type="PROSITE" id="PS50068">
    <property type="entry name" value="LDLRA_2"/>
    <property type="match status" value="4"/>
</dbReference>
<organism>
    <name type="scientific">Homo sapiens</name>
    <name type="common">Human</name>
    <dbReference type="NCBI Taxonomy" id="9606"/>
    <lineage>
        <taxon>Eukaryota</taxon>
        <taxon>Metazoa</taxon>
        <taxon>Chordata</taxon>
        <taxon>Craniata</taxon>
        <taxon>Vertebrata</taxon>
        <taxon>Euteleostomi</taxon>
        <taxon>Mammalia</taxon>
        <taxon>Eutheria</taxon>
        <taxon>Euarchontoglires</taxon>
        <taxon>Primates</taxon>
        <taxon>Haplorrhini</taxon>
        <taxon>Catarrhini</taxon>
        <taxon>Hominidae</taxon>
        <taxon>Homo</taxon>
    </lineage>
</organism>
<name>LRP10_HUMAN</name>
<keyword id="KW-0025">Alternative splicing</keyword>
<keyword id="KW-0168">Coated pit</keyword>
<keyword id="KW-1015">Disulfide bond</keyword>
<keyword id="KW-0254">Endocytosis</keyword>
<keyword id="KW-0325">Glycoprotein</keyword>
<keyword id="KW-0472">Membrane</keyword>
<keyword id="KW-0597">Phosphoprotein</keyword>
<keyword id="KW-1267">Proteomics identification</keyword>
<keyword id="KW-0675">Receptor</keyword>
<keyword id="KW-1185">Reference proteome</keyword>
<keyword id="KW-0677">Repeat</keyword>
<keyword id="KW-0732">Signal</keyword>
<keyword id="KW-0812">Transmembrane</keyword>
<keyword id="KW-1133">Transmembrane helix</keyword>
<proteinExistence type="evidence at protein level"/>